<dbReference type="EC" id="6.3.5.-" evidence="1"/>
<dbReference type="EMBL" id="CP001390">
    <property type="protein sequence ID" value="ACM18749.1"/>
    <property type="molecule type" value="Genomic_DNA"/>
</dbReference>
<dbReference type="RefSeq" id="WP_012645478.1">
    <property type="nucleotide sequence ID" value="NC_011979.1"/>
</dbReference>
<dbReference type="SMR" id="B9LZ17"/>
<dbReference type="STRING" id="316067.Geob_0380"/>
<dbReference type="KEGG" id="geo:Geob_0380"/>
<dbReference type="eggNOG" id="COG0721">
    <property type="taxonomic scope" value="Bacteria"/>
</dbReference>
<dbReference type="HOGENOM" id="CLU_105899_1_2_7"/>
<dbReference type="OrthoDB" id="9813938at2"/>
<dbReference type="Proteomes" id="UP000007721">
    <property type="component" value="Chromosome"/>
</dbReference>
<dbReference type="GO" id="GO:0050566">
    <property type="term" value="F:asparaginyl-tRNA synthase (glutamine-hydrolyzing) activity"/>
    <property type="evidence" value="ECO:0007669"/>
    <property type="project" value="RHEA"/>
</dbReference>
<dbReference type="GO" id="GO:0005524">
    <property type="term" value="F:ATP binding"/>
    <property type="evidence" value="ECO:0007669"/>
    <property type="project" value="UniProtKB-KW"/>
</dbReference>
<dbReference type="GO" id="GO:0050567">
    <property type="term" value="F:glutaminyl-tRNA synthase (glutamine-hydrolyzing) activity"/>
    <property type="evidence" value="ECO:0007669"/>
    <property type="project" value="UniProtKB-UniRule"/>
</dbReference>
<dbReference type="GO" id="GO:0070681">
    <property type="term" value="P:glutaminyl-tRNAGln biosynthesis via transamidation"/>
    <property type="evidence" value="ECO:0007669"/>
    <property type="project" value="TreeGrafter"/>
</dbReference>
<dbReference type="GO" id="GO:0006450">
    <property type="term" value="P:regulation of translational fidelity"/>
    <property type="evidence" value="ECO:0007669"/>
    <property type="project" value="InterPro"/>
</dbReference>
<dbReference type="GO" id="GO:0006412">
    <property type="term" value="P:translation"/>
    <property type="evidence" value="ECO:0007669"/>
    <property type="project" value="UniProtKB-UniRule"/>
</dbReference>
<dbReference type="Gene3D" id="1.10.20.60">
    <property type="entry name" value="Glu-tRNAGln amidotransferase C subunit, N-terminal domain"/>
    <property type="match status" value="1"/>
</dbReference>
<dbReference type="HAMAP" id="MF_00122">
    <property type="entry name" value="GatC"/>
    <property type="match status" value="1"/>
</dbReference>
<dbReference type="InterPro" id="IPR036113">
    <property type="entry name" value="Asp/Glu-ADT_sf_sub_c"/>
</dbReference>
<dbReference type="InterPro" id="IPR003837">
    <property type="entry name" value="GatC"/>
</dbReference>
<dbReference type="NCBIfam" id="TIGR00135">
    <property type="entry name" value="gatC"/>
    <property type="match status" value="1"/>
</dbReference>
<dbReference type="PANTHER" id="PTHR15004">
    <property type="entry name" value="GLUTAMYL-TRNA(GLN) AMIDOTRANSFERASE SUBUNIT C, MITOCHONDRIAL"/>
    <property type="match status" value="1"/>
</dbReference>
<dbReference type="PANTHER" id="PTHR15004:SF0">
    <property type="entry name" value="GLUTAMYL-TRNA(GLN) AMIDOTRANSFERASE SUBUNIT C, MITOCHONDRIAL"/>
    <property type="match status" value="1"/>
</dbReference>
<dbReference type="Pfam" id="PF02686">
    <property type="entry name" value="GatC"/>
    <property type="match status" value="1"/>
</dbReference>
<dbReference type="SUPFAM" id="SSF141000">
    <property type="entry name" value="Glu-tRNAGln amidotransferase C subunit"/>
    <property type="match status" value="1"/>
</dbReference>
<comment type="function">
    <text evidence="1">Allows the formation of correctly charged Asn-tRNA(Asn) or Gln-tRNA(Gln) through the transamidation of misacylated Asp-tRNA(Asn) or Glu-tRNA(Gln) in organisms which lack either or both of asparaginyl-tRNA or glutaminyl-tRNA synthetases. The reaction takes place in the presence of glutamine and ATP through an activated phospho-Asp-tRNA(Asn) or phospho-Glu-tRNA(Gln).</text>
</comment>
<comment type="catalytic activity">
    <reaction evidence="1">
        <text>L-glutamyl-tRNA(Gln) + L-glutamine + ATP + H2O = L-glutaminyl-tRNA(Gln) + L-glutamate + ADP + phosphate + H(+)</text>
        <dbReference type="Rhea" id="RHEA:17521"/>
        <dbReference type="Rhea" id="RHEA-COMP:9681"/>
        <dbReference type="Rhea" id="RHEA-COMP:9684"/>
        <dbReference type="ChEBI" id="CHEBI:15377"/>
        <dbReference type="ChEBI" id="CHEBI:15378"/>
        <dbReference type="ChEBI" id="CHEBI:29985"/>
        <dbReference type="ChEBI" id="CHEBI:30616"/>
        <dbReference type="ChEBI" id="CHEBI:43474"/>
        <dbReference type="ChEBI" id="CHEBI:58359"/>
        <dbReference type="ChEBI" id="CHEBI:78520"/>
        <dbReference type="ChEBI" id="CHEBI:78521"/>
        <dbReference type="ChEBI" id="CHEBI:456216"/>
    </reaction>
</comment>
<comment type="catalytic activity">
    <reaction evidence="1">
        <text>L-aspartyl-tRNA(Asn) + L-glutamine + ATP + H2O = L-asparaginyl-tRNA(Asn) + L-glutamate + ADP + phosphate + 2 H(+)</text>
        <dbReference type="Rhea" id="RHEA:14513"/>
        <dbReference type="Rhea" id="RHEA-COMP:9674"/>
        <dbReference type="Rhea" id="RHEA-COMP:9677"/>
        <dbReference type="ChEBI" id="CHEBI:15377"/>
        <dbReference type="ChEBI" id="CHEBI:15378"/>
        <dbReference type="ChEBI" id="CHEBI:29985"/>
        <dbReference type="ChEBI" id="CHEBI:30616"/>
        <dbReference type="ChEBI" id="CHEBI:43474"/>
        <dbReference type="ChEBI" id="CHEBI:58359"/>
        <dbReference type="ChEBI" id="CHEBI:78515"/>
        <dbReference type="ChEBI" id="CHEBI:78516"/>
        <dbReference type="ChEBI" id="CHEBI:456216"/>
    </reaction>
</comment>
<comment type="subunit">
    <text evidence="1">Heterotrimer of A, B and C subunits.</text>
</comment>
<comment type="similarity">
    <text evidence="1">Belongs to the GatC family.</text>
</comment>
<organism>
    <name type="scientific">Geotalea daltonii (strain DSM 22248 / JCM 15807 / FRC-32)</name>
    <name type="common">Geobacter daltonii</name>
    <dbReference type="NCBI Taxonomy" id="316067"/>
    <lineage>
        <taxon>Bacteria</taxon>
        <taxon>Pseudomonadati</taxon>
        <taxon>Thermodesulfobacteriota</taxon>
        <taxon>Desulfuromonadia</taxon>
        <taxon>Geobacterales</taxon>
        <taxon>Geobacteraceae</taxon>
        <taxon>Geotalea</taxon>
    </lineage>
</organism>
<keyword id="KW-0067">ATP-binding</keyword>
<keyword id="KW-0436">Ligase</keyword>
<keyword id="KW-0547">Nucleotide-binding</keyword>
<keyword id="KW-0648">Protein biosynthesis</keyword>
<keyword id="KW-1185">Reference proteome</keyword>
<feature type="chain" id="PRO_1000122567" description="Aspartyl/glutamyl-tRNA(Asn/Gln) amidotransferase subunit C">
    <location>
        <begin position="1"/>
        <end position="95"/>
    </location>
</feature>
<protein>
    <recommendedName>
        <fullName evidence="1">Aspartyl/glutamyl-tRNA(Asn/Gln) amidotransferase subunit C</fullName>
        <shortName evidence="1">Asp/Glu-ADT subunit C</shortName>
        <ecNumber evidence="1">6.3.5.-</ecNumber>
    </recommendedName>
</protein>
<reference key="1">
    <citation type="submission" date="2009-01" db="EMBL/GenBank/DDBJ databases">
        <title>Complete sequence of Geobacter sp. FRC-32.</title>
        <authorList>
            <consortium name="US DOE Joint Genome Institute"/>
            <person name="Lucas S."/>
            <person name="Copeland A."/>
            <person name="Lapidus A."/>
            <person name="Glavina del Rio T."/>
            <person name="Dalin E."/>
            <person name="Tice H."/>
            <person name="Bruce D."/>
            <person name="Goodwin L."/>
            <person name="Pitluck S."/>
            <person name="Saunders E."/>
            <person name="Brettin T."/>
            <person name="Detter J.C."/>
            <person name="Han C."/>
            <person name="Larimer F."/>
            <person name="Land M."/>
            <person name="Hauser L."/>
            <person name="Kyrpides N."/>
            <person name="Ovchinnikova G."/>
            <person name="Kostka J."/>
            <person name="Richardson P."/>
        </authorList>
    </citation>
    <scope>NUCLEOTIDE SEQUENCE [LARGE SCALE GENOMIC DNA]</scope>
    <source>
        <strain>DSM 22248 / JCM 15807 / FRC-32</strain>
    </source>
</reference>
<accession>B9LZ17</accession>
<sequence length="95" mass="10517">MKINKDEVEKVALLARLELTGEEAEMFTGQMDAILAYVDKLNELNTDGIVPTAHAVPMENAFRADEVRDSIGIDNALANAPKRAESFFRVPKVIE</sequence>
<gene>
    <name evidence="1" type="primary">gatC</name>
    <name type="ordered locus">Geob_0380</name>
</gene>
<evidence type="ECO:0000255" key="1">
    <source>
        <dbReference type="HAMAP-Rule" id="MF_00122"/>
    </source>
</evidence>
<proteinExistence type="inferred from homology"/>
<name>GATC_GEODF</name>